<sequence>MSMAISIRSSTRPVEVRRLGTVEYLDAWELQRGLVDARVAGGSDALLLLQHPSVYTAGKRTEPHERPADGTPVVDTDRGGKITWHGPGQLVGYPIVGLAEPLDVVNFVRRIEEALIAVCTGLGLDAGRVEGRSGVWLPGDGLRPERKIGAIGIRVSRGTTLHGFALNCDCDLSAFSAIVPCGIADAGVTSLTAELGRRVTVDEVTDAVAARVCDALDGRLAVSGVSVDTYASGVASTQ</sequence>
<gene>
    <name evidence="1" type="primary">lipB</name>
    <name type="ordered locus">Mmcs_3315</name>
</gene>
<proteinExistence type="inferred from homology"/>
<keyword id="KW-0012">Acyltransferase</keyword>
<keyword id="KW-0963">Cytoplasm</keyword>
<keyword id="KW-0808">Transferase</keyword>
<accession>Q1B6R2</accession>
<organism>
    <name type="scientific">Mycobacterium sp. (strain MCS)</name>
    <dbReference type="NCBI Taxonomy" id="164756"/>
    <lineage>
        <taxon>Bacteria</taxon>
        <taxon>Bacillati</taxon>
        <taxon>Actinomycetota</taxon>
        <taxon>Actinomycetes</taxon>
        <taxon>Mycobacteriales</taxon>
        <taxon>Mycobacteriaceae</taxon>
        <taxon>Mycobacterium</taxon>
    </lineage>
</organism>
<reference key="1">
    <citation type="submission" date="2006-06" db="EMBL/GenBank/DDBJ databases">
        <title>Complete sequence of chromosome of Mycobacterium sp. MCS.</title>
        <authorList>
            <consortium name="US DOE Joint Genome Institute"/>
            <person name="Copeland A."/>
            <person name="Lucas S."/>
            <person name="Lapidus A."/>
            <person name="Barry K."/>
            <person name="Detter J.C."/>
            <person name="Glavina del Rio T."/>
            <person name="Hammon N."/>
            <person name="Israni S."/>
            <person name="Dalin E."/>
            <person name="Tice H."/>
            <person name="Pitluck S."/>
            <person name="Martinez M."/>
            <person name="Schmutz J."/>
            <person name="Larimer F."/>
            <person name="Land M."/>
            <person name="Hauser L."/>
            <person name="Kyrpides N."/>
            <person name="Kim E."/>
            <person name="Miller C.D."/>
            <person name="Hughes J.E."/>
            <person name="Anderson A.J."/>
            <person name="Sims R.C."/>
            <person name="Richardson P."/>
        </authorList>
    </citation>
    <scope>NUCLEOTIDE SEQUENCE [LARGE SCALE GENOMIC DNA]</scope>
    <source>
        <strain>MCS</strain>
    </source>
</reference>
<dbReference type="EC" id="2.3.1.181" evidence="1"/>
<dbReference type="EMBL" id="CP000384">
    <property type="protein sequence ID" value="ABG09422.1"/>
    <property type="molecule type" value="Genomic_DNA"/>
</dbReference>
<dbReference type="SMR" id="Q1B6R2"/>
<dbReference type="KEGG" id="mmc:Mmcs_3315"/>
<dbReference type="HOGENOM" id="CLU_035168_2_1_11"/>
<dbReference type="UniPathway" id="UPA00538">
    <property type="reaction ID" value="UER00592"/>
</dbReference>
<dbReference type="GO" id="GO:0005737">
    <property type="term" value="C:cytoplasm"/>
    <property type="evidence" value="ECO:0007669"/>
    <property type="project" value="UniProtKB-SubCell"/>
</dbReference>
<dbReference type="GO" id="GO:0033819">
    <property type="term" value="F:lipoyl(octanoyl) transferase activity"/>
    <property type="evidence" value="ECO:0007669"/>
    <property type="project" value="UniProtKB-EC"/>
</dbReference>
<dbReference type="GO" id="GO:0036211">
    <property type="term" value="P:protein modification process"/>
    <property type="evidence" value="ECO:0007669"/>
    <property type="project" value="InterPro"/>
</dbReference>
<dbReference type="CDD" id="cd16444">
    <property type="entry name" value="LipB"/>
    <property type="match status" value="1"/>
</dbReference>
<dbReference type="FunFam" id="3.30.930.10:FF:000035">
    <property type="entry name" value="Putative lipoyltransferase 2, mitochondrial"/>
    <property type="match status" value="1"/>
</dbReference>
<dbReference type="Gene3D" id="3.30.930.10">
    <property type="entry name" value="Bira Bifunctional Protein, Domain 2"/>
    <property type="match status" value="1"/>
</dbReference>
<dbReference type="HAMAP" id="MF_00013">
    <property type="entry name" value="LipB"/>
    <property type="match status" value="1"/>
</dbReference>
<dbReference type="InterPro" id="IPR045864">
    <property type="entry name" value="aa-tRNA-synth_II/BPL/LPL"/>
</dbReference>
<dbReference type="InterPro" id="IPR004143">
    <property type="entry name" value="BPL_LPL_catalytic"/>
</dbReference>
<dbReference type="InterPro" id="IPR000544">
    <property type="entry name" value="Octanoyltransferase"/>
</dbReference>
<dbReference type="InterPro" id="IPR020605">
    <property type="entry name" value="Octanoyltransferase_CS"/>
</dbReference>
<dbReference type="NCBIfam" id="TIGR00214">
    <property type="entry name" value="lipB"/>
    <property type="match status" value="1"/>
</dbReference>
<dbReference type="NCBIfam" id="NF010925">
    <property type="entry name" value="PRK14345.1"/>
    <property type="match status" value="1"/>
</dbReference>
<dbReference type="PANTHER" id="PTHR10993:SF7">
    <property type="entry name" value="LIPOYLTRANSFERASE 2, MITOCHONDRIAL-RELATED"/>
    <property type="match status" value="1"/>
</dbReference>
<dbReference type="PANTHER" id="PTHR10993">
    <property type="entry name" value="OCTANOYLTRANSFERASE"/>
    <property type="match status" value="1"/>
</dbReference>
<dbReference type="Pfam" id="PF21948">
    <property type="entry name" value="LplA-B_cat"/>
    <property type="match status" value="1"/>
</dbReference>
<dbReference type="PIRSF" id="PIRSF016262">
    <property type="entry name" value="LPLase"/>
    <property type="match status" value="1"/>
</dbReference>
<dbReference type="SUPFAM" id="SSF55681">
    <property type="entry name" value="Class II aaRS and biotin synthetases"/>
    <property type="match status" value="1"/>
</dbReference>
<dbReference type="PROSITE" id="PS51733">
    <property type="entry name" value="BPL_LPL_CATALYTIC"/>
    <property type="match status" value="1"/>
</dbReference>
<dbReference type="PROSITE" id="PS01313">
    <property type="entry name" value="LIPB"/>
    <property type="match status" value="1"/>
</dbReference>
<protein>
    <recommendedName>
        <fullName evidence="1">Octanoyltransferase</fullName>
        <ecNumber evidence="1">2.3.1.181</ecNumber>
    </recommendedName>
    <alternativeName>
        <fullName evidence="1">Lipoate-protein ligase B</fullName>
    </alternativeName>
    <alternativeName>
        <fullName evidence="1">Lipoyl/octanoyl transferase</fullName>
    </alternativeName>
    <alternativeName>
        <fullName evidence="1">Octanoyl-[acyl-carrier-protein]-protein N-octanoyltransferase</fullName>
    </alternativeName>
</protein>
<evidence type="ECO:0000255" key="1">
    <source>
        <dbReference type="HAMAP-Rule" id="MF_00013"/>
    </source>
</evidence>
<evidence type="ECO:0000255" key="2">
    <source>
        <dbReference type="PROSITE-ProRule" id="PRU01067"/>
    </source>
</evidence>
<comment type="function">
    <text evidence="1">Catalyzes the transfer of endogenously produced octanoic acid from octanoyl-acyl-carrier-protein onto the lipoyl domains of lipoate-dependent enzymes. Lipoyl-ACP can also act as a substrate although octanoyl-ACP is likely to be the physiological substrate.</text>
</comment>
<comment type="catalytic activity">
    <reaction evidence="1">
        <text>octanoyl-[ACP] + L-lysyl-[protein] = N(6)-octanoyl-L-lysyl-[protein] + holo-[ACP] + H(+)</text>
        <dbReference type="Rhea" id="RHEA:17665"/>
        <dbReference type="Rhea" id="RHEA-COMP:9636"/>
        <dbReference type="Rhea" id="RHEA-COMP:9685"/>
        <dbReference type="Rhea" id="RHEA-COMP:9752"/>
        <dbReference type="Rhea" id="RHEA-COMP:9928"/>
        <dbReference type="ChEBI" id="CHEBI:15378"/>
        <dbReference type="ChEBI" id="CHEBI:29969"/>
        <dbReference type="ChEBI" id="CHEBI:64479"/>
        <dbReference type="ChEBI" id="CHEBI:78463"/>
        <dbReference type="ChEBI" id="CHEBI:78809"/>
        <dbReference type="EC" id="2.3.1.181"/>
    </reaction>
</comment>
<comment type="pathway">
    <text evidence="1">Protein modification; protein lipoylation via endogenous pathway; protein N(6)-(lipoyl)lysine from octanoyl-[acyl-carrier-protein]: step 1/2.</text>
</comment>
<comment type="subcellular location">
    <subcellularLocation>
        <location evidence="1">Cytoplasm</location>
    </subcellularLocation>
</comment>
<comment type="miscellaneous">
    <text evidence="1">In the reaction, the free carboxyl group of octanoic acid is attached via an amide linkage to the epsilon-amino group of a specific lysine residue of lipoyl domains of lipoate-dependent enzymes.</text>
</comment>
<comment type="similarity">
    <text evidence="1">Belongs to the LipB family.</text>
</comment>
<name>LIPB_MYCSS</name>
<feature type="chain" id="PRO_0000321650" description="Octanoyltransferase">
    <location>
        <begin position="1"/>
        <end position="238"/>
    </location>
</feature>
<feature type="domain" description="BPL/LPL catalytic" evidence="2">
    <location>
        <begin position="40"/>
        <end position="220"/>
    </location>
</feature>
<feature type="active site" description="Acyl-thioester intermediate" evidence="1">
    <location>
        <position position="181"/>
    </location>
</feature>
<feature type="binding site" evidence="1">
    <location>
        <begin position="78"/>
        <end position="85"/>
    </location>
    <ligand>
        <name>substrate</name>
    </ligand>
</feature>
<feature type="binding site" evidence="1">
    <location>
        <begin position="150"/>
        <end position="152"/>
    </location>
    <ligand>
        <name>substrate</name>
    </ligand>
</feature>
<feature type="binding site" evidence="1">
    <location>
        <begin position="163"/>
        <end position="165"/>
    </location>
    <ligand>
        <name>substrate</name>
    </ligand>
</feature>
<feature type="site" description="Lowers pKa of active site Cys" evidence="1">
    <location>
        <position position="147"/>
    </location>
</feature>